<accession>Q5X765</accession>
<organism>
    <name type="scientific">Legionella pneumophila (strain Paris)</name>
    <dbReference type="NCBI Taxonomy" id="297246"/>
    <lineage>
        <taxon>Bacteria</taxon>
        <taxon>Pseudomonadati</taxon>
        <taxon>Pseudomonadota</taxon>
        <taxon>Gammaproteobacteria</taxon>
        <taxon>Legionellales</taxon>
        <taxon>Legionellaceae</taxon>
        <taxon>Legionella</taxon>
    </lineage>
</organism>
<protein>
    <recommendedName>
        <fullName evidence="1">Ribosomal protein uS12 methylthiotransferase RimO</fullName>
        <shortName evidence="1">uS12 MTTase</shortName>
        <shortName evidence="1">uS12 methylthiotransferase</shortName>
        <ecNumber evidence="1">2.8.4.4</ecNumber>
    </recommendedName>
    <alternativeName>
        <fullName evidence="1">Ribosomal protein uS12 (aspartate-C(3))-methylthiotransferase</fullName>
    </alternativeName>
    <alternativeName>
        <fullName evidence="1">Ribosome maturation factor RimO</fullName>
    </alternativeName>
</protein>
<keyword id="KW-0004">4Fe-4S</keyword>
<keyword id="KW-0963">Cytoplasm</keyword>
<keyword id="KW-0408">Iron</keyword>
<keyword id="KW-0411">Iron-sulfur</keyword>
<keyword id="KW-0479">Metal-binding</keyword>
<keyword id="KW-0949">S-adenosyl-L-methionine</keyword>
<keyword id="KW-0808">Transferase</keyword>
<proteinExistence type="inferred from homology"/>
<gene>
    <name evidence="1" type="primary">rimO</name>
    <name type="ordered locus">lpp0740</name>
</gene>
<comment type="function">
    <text evidence="1">Catalyzes the methylthiolation of an aspartic acid residue of ribosomal protein uS12.</text>
</comment>
<comment type="catalytic activity">
    <reaction evidence="1">
        <text>L-aspartate(89)-[ribosomal protein uS12]-hydrogen + (sulfur carrier)-SH + AH2 + 2 S-adenosyl-L-methionine = 3-methylsulfanyl-L-aspartate(89)-[ribosomal protein uS12]-hydrogen + (sulfur carrier)-H + 5'-deoxyadenosine + L-methionine + A + S-adenosyl-L-homocysteine + 2 H(+)</text>
        <dbReference type="Rhea" id="RHEA:37087"/>
        <dbReference type="Rhea" id="RHEA-COMP:10460"/>
        <dbReference type="Rhea" id="RHEA-COMP:10461"/>
        <dbReference type="Rhea" id="RHEA-COMP:14737"/>
        <dbReference type="Rhea" id="RHEA-COMP:14739"/>
        <dbReference type="ChEBI" id="CHEBI:13193"/>
        <dbReference type="ChEBI" id="CHEBI:15378"/>
        <dbReference type="ChEBI" id="CHEBI:17319"/>
        <dbReference type="ChEBI" id="CHEBI:17499"/>
        <dbReference type="ChEBI" id="CHEBI:29917"/>
        <dbReference type="ChEBI" id="CHEBI:29961"/>
        <dbReference type="ChEBI" id="CHEBI:57844"/>
        <dbReference type="ChEBI" id="CHEBI:57856"/>
        <dbReference type="ChEBI" id="CHEBI:59789"/>
        <dbReference type="ChEBI" id="CHEBI:64428"/>
        <dbReference type="ChEBI" id="CHEBI:73599"/>
        <dbReference type="EC" id="2.8.4.4"/>
    </reaction>
</comment>
<comment type="cofactor">
    <cofactor evidence="1">
        <name>[4Fe-4S] cluster</name>
        <dbReference type="ChEBI" id="CHEBI:49883"/>
    </cofactor>
    <text evidence="1">Binds 2 [4Fe-4S] clusters. One cluster is coordinated with 3 cysteines and an exchangeable S-adenosyl-L-methionine.</text>
</comment>
<comment type="subcellular location">
    <subcellularLocation>
        <location evidence="1">Cytoplasm</location>
    </subcellularLocation>
</comment>
<comment type="similarity">
    <text evidence="1">Belongs to the methylthiotransferase family. RimO subfamily.</text>
</comment>
<evidence type="ECO:0000255" key="1">
    <source>
        <dbReference type="HAMAP-Rule" id="MF_01865"/>
    </source>
</evidence>
<evidence type="ECO:0000255" key="2">
    <source>
        <dbReference type="PROSITE-ProRule" id="PRU01266"/>
    </source>
</evidence>
<feature type="chain" id="PRO_0000374875" description="Ribosomal protein uS12 methylthiotransferase RimO">
    <location>
        <begin position="1"/>
        <end position="439"/>
    </location>
</feature>
<feature type="domain" description="MTTase N-terminal" evidence="1">
    <location>
        <begin position="3"/>
        <end position="113"/>
    </location>
</feature>
<feature type="domain" description="Radical SAM core" evidence="2">
    <location>
        <begin position="130"/>
        <end position="367"/>
    </location>
</feature>
<feature type="domain" description="TRAM" evidence="1">
    <location>
        <begin position="370"/>
        <end position="436"/>
    </location>
</feature>
<feature type="binding site" evidence="1">
    <location>
        <position position="12"/>
    </location>
    <ligand>
        <name>[4Fe-4S] cluster</name>
        <dbReference type="ChEBI" id="CHEBI:49883"/>
        <label>1</label>
    </ligand>
</feature>
<feature type="binding site" evidence="1">
    <location>
        <position position="48"/>
    </location>
    <ligand>
        <name>[4Fe-4S] cluster</name>
        <dbReference type="ChEBI" id="CHEBI:49883"/>
        <label>1</label>
    </ligand>
</feature>
<feature type="binding site" evidence="1">
    <location>
        <position position="77"/>
    </location>
    <ligand>
        <name>[4Fe-4S] cluster</name>
        <dbReference type="ChEBI" id="CHEBI:49883"/>
        <label>1</label>
    </ligand>
</feature>
<feature type="binding site" evidence="1">
    <location>
        <position position="144"/>
    </location>
    <ligand>
        <name>[4Fe-4S] cluster</name>
        <dbReference type="ChEBI" id="CHEBI:49883"/>
        <label>2</label>
        <note>4Fe-4S-S-AdoMet</note>
    </ligand>
</feature>
<feature type="binding site" evidence="1">
    <location>
        <position position="148"/>
    </location>
    <ligand>
        <name>[4Fe-4S] cluster</name>
        <dbReference type="ChEBI" id="CHEBI:49883"/>
        <label>2</label>
        <note>4Fe-4S-S-AdoMet</note>
    </ligand>
</feature>
<feature type="binding site" evidence="1">
    <location>
        <position position="151"/>
    </location>
    <ligand>
        <name>[4Fe-4S] cluster</name>
        <dbReference type="ChEBI" id="CHEBI:49883"/>
        <label>2</label>
        <note>4Fe-4S-S-AdoMet</note>
    </ligand>
</feature>
<sequence length="439" mass="49002">MNHKVGFVSLGCPKALVDSERIITQLKAQGYELVPTYEDAGVVVINTCGFIDSAVQESLDTIKEAMAENGRVIVTGCLGAKADVIKNACPDVLHISGAHAYEEVVNAVHQHLPPPADPFTQLIPPQGIKLTPRHYAYLKISEGCNQKCTFCIIPTMRGKLQSYPMAQILTEAKKLKQAGVKELLVISQDTSAYGVDTRYQQIEWQGKTVNTRFYDLCEQLGELGIWVRLHYVYPYPHVDDIVPLMRDGLILPYLDIPLQHANSRILKAMKRPASSENTLLRIASWREICPDITLRSTFIVGFPGETEEEFSELLAFLKEAQLDRVGCFKYSPVEGAKANDLDNPVSEDIKEERYHRFMQVQAEISRNKLKNKIGSTQTVLIDEITEDQIIARSKSDAPEIDGLVYLPKISGITVGSFAEAMITDSDDYDLYGDLEYSLA</sequence>
<reference key="1">
    <citation type="journal article" date="2004" name="Nat. Genet.">
        <title>Evidence in the Legionella pneumophila genome for exploitation of host cell functions and high genome plasticity.</title>
        <authorList>
            <person name="Cazalet C."/>
            <person name="Rusniok C."/>
            <person name="Brueggemann H."/>
            <person name="Zidane N."/>
            <person name="Magnier A."/>
            <person name="Ma L."/>
            <person name="Tichit M."/>
            <person name="Jarraud S."/>
            <person name="Bouchier C."/>
            <person name="Vandenesch F."/>
            <person name="Kunst F."/>
            <person name="Etienne J."/>
            <person name="Glaser P."/>
            <person name="Buchrieser C."/>
        </authorList>
    </citation>
    <scope>NUCLEOTIDE SEQUENCE [LARGE SCALE GENOMIC DNA]</scope>
    <source>
        <strain>Paris</strain>
    </source>
</reference>
<dbReference type="EC" id="2.8.4.4" evidence="1"/>
<dbReference type="EMBL" id="CR628336">
    <property type="protein sequence ID" value="CAH11888.1"/>
    <property type="molecule type" value="Genomic_DNA"/>
</dbReference>
<dbReference type="RefSeq" id="WP_011213269.1">
    <property type="nucleotide sequence ID" value="NC_006368.1"/>
</dbReference>
<dbReference type="SMR" id="Q5X765"/>
<dbReference type="KEGG" id="lpp:lpp0740"/>
<dbReference type="LegioList" id="lpp0740"/>
<dbReference type="HOGENOM" id="CLU_018697_0_0_6"/>
<dbReference type="GO" id="GO:0005829">
    <property type="term" value="C:cytosol"/>
    <property type="evidence" value="ECO:0007669"/>
    <property type="project" value="TreeGrafter"/>
</dbReference>
<dbReference type="GO" id="GO:0051539">
    <property type="term" value="F:4 iron, 4 sulfur cluster binding"/>
    <property type="evidence" value="ECO:0007669"/>
    <property type="project" value="UniProtKB-UniRule"/>
</dbReference>
<dbReference type="GO" id="GO:0035599">
    <property type="term" value="F:aspartic acid methylthiotransferase activity"/>
    <property type="evidence" value="ECO:0007669"/>
    <property type="project" value="TreeGrafter"/>
</dbReference>
<dbReference type="GO" id="GO:0046872">
    <property type="term" value="F:metal ion binding"/>
    <property type="evidence" value="ECO:0007669"/>
    <property type="project" value="UniProtKB-KW"/>
</dbReference>
<dbReference type="GO" id="GO:0103039">
    <property type="term" value="F:protein methylthiotransferase activity"/>
    <property type="evidence" value="ECO:0007669"/>
    <property type="project" value="UniProtKB-EC"/>
</dbReference>
<dbReference type="GO" id="GO:0006400">
    <property type="term" value="P:tRNA modification"/>
    <property type="evidence" value="ECO:0007669"/>
    <property type="project" value="InterPro"/>
</dbReference>
<dbReference type="CDD" id="cd01335">
    <property type="entry name" value="Radical_SAM"/>
    <property type="match status" value="1"/>
</dbReference>
<dbReference type="FunFam" id="3.40.50.12160:FF:000002">
    <property type="entry name" value="Ribosomal protein S12 methylthiotransferase RimO"/>
    <property type="match status" value="1"/>
</dbReference>
<dbReference type="FunFam" id="3.80.30.20:FF:000001">
    <property type="entry name" value="tRNA-2-methylthio-N(6)-dimethylallyladenosine synthase 2"/>
    <property type="match status" value="1"/>
</dbReference>
<dbReference type="Gene3D" id="3.40.50.12160">
    <property type="entry name" value="Methylthiotransferase, N-terminal domain"/>
    <property type="match status" value="1"/>
</dbReference>
<dbReference type="Gene3D" id="2.40.50.140">
    <property type="entry name" value="Nucleic acid-binding proteins"/>
    <property type="match status" value="1"/>
</dbReference>
<dbReference type="Gene3D" id="3.80.30.20">
    <property type="entry name" value="tm_1862 like domain"/>
    <property type="match status" value="1"/>
</dbReference>
<dbReference type="HAMAP" id="MF_01865">
    <property type="entry name" value="MTTase_RimO"/>
    <property type="match status" value="1"/>
</dbReference>
<dbReference type="InterPro" id="IPR006638">
    <property type="entry name" value="Elp3/MiaA/NifB-like_rSAM"/>
</dbReference>
<dbReference type="InterPro" id="IPR005839">
    <property type="entry name" value="Methylthiotransferase"/>
</dbReference>
<dbReference type="InterPro" id="IPR020612">
    <property type="entry name" value="Methylthiotransferase_CS"/>
</dbReference>
<dbReference type="InterPro" id="IPR013848">
    <property type="entry name" value="Methylthiotransferase_N"/>
</dbReference>
<dbReference type="InterPro" id="IPR038135">
    <property type="entry name" value="Methylthiotransferase_N_sf"/>
</dbReference>
<dbReference type="InterPro" id="IPR012340">
    <property type="entry name" value="NA-bd_OB-fold"/>
</dbReference>
<dbReference type="InterPro" id="IPR005840">
    <property type="entry name" value="Ribosomal_uS12_MeSTrfase_RimO"/>
</dbReference>
<dbReference type="InterPro" id="IPR007197">
    <property type="entry name" value="rSAM"/>
</dbReference>
<dbReference type="InterPro" id="IPR023404">
    <property type="entry name" value="rSAM_horseshoe"/>
</dbReference>
<dbReference type="InterPro" id="IPR002792">
    <property type="entry name" value="TRAM_dom"/>
</dbReference>
<dbReference type="NCBIfam" id="TIGR01125">
    <property type="entry name" value="30S ribosomal protein S12 methylthiotransferase RimO"/>
    <property type="match status" value="1"/>
</dbReference>
<dbReference type="NCBIfam" id="TIGR00089">
    <property type="entry name" value="MiaB/RimO family radical SAM methylthiotransferase"/>
    <property type="match status" value="1"/>
</dbReference>
<dbReference type="PANTHER" id="PTHR43837">
    <property type="entry name" value="RIBOSOMAL PROTEIN S12 METHYLTHIOTRANSFERASE RIMO"/>
    <property type="match status" value="1"/>
</dbReference>
<dbReference type="PANTHER" id="PTHR43837:SF1">
    <property type="entry name" value="RIBOSOMAL PROTEIN US12 METHYLTHIOTRANSFERASE RIMO"/>
    <property type="match status" value="1"/>
</dbReference>
<dbReference type="Pfam" id="PF04055">
    <property type="entry name" value="Radical_SAM"/>
    <property type="match status" value="1"/>
</dbReference>
<dbReference type="Pfam" id="PF18693">
    <property type="entry name" value="TRAM_2"/>
    <property type="match status" value="1"/>
</dbReference>
<dbReference type="Pfam" id="PF00919">
    <property type="entry name" value="UPF0004"/>
    <property type="match status" value="1"/>
</dbReference>
<dbReference type="SFLD" id="SFLDG01082">
    <property type="entry name" value="B12-binding_domain_containing"/>
    <property type="match status" value="1"/>
</dbReference>
<dbReference type="SFLD" id="SFLDG01061">
    <property type="entry name" value="methylthiotransferase"/>
    <property type="match status" value="1"/>
</dbReference>
<dbReference type="SFLD" id="SFLDF00274">
    <property type="entry name" value="ribosomal_protein_S12_methylth"/>
    <property type="match status" value="1"/>
</dbReference>
<dbReference type="SMART" id="SM00729">
    <property type="entry name" value="Elp3"/>
    <property type="match status" value="1"/>
</dbReference>
<dbReference type="SUPFAM" id="SSF102114">
    <property type="entry name" value="Radical SAM enzymes"/>
    <property type="match status" value="1"/>
</dbReference>
<dbReference type="PROSITE" id="PS51449">
    <property type="entry name" value="MTTASE_N"/>
    <property type="match status" value="1"/>
</dbReference>
<dbReference type="PROSITE" id="PS01278">
    <property type="entry name" value="MTTASE_RADICAL"/>
    <property type="match status" value="1"/>
</dbReference>
<dbReference type="PROSITE" id="PS51918">
    <property type="entry name" value="RADICAL_SAM"/>
    <property type="match status" value="1"/>
</dbReference>
<dbReference type="PROSITE" id="PS50926">
    <property type="entry name" value="TRAM"/>
    <property type="match status" value="1"/>
</dbReference>
<name>RIMO_LEGPA</name>